<sequence length="376" mass="42281">MESYDIIANQPVVIDNGSGVIKAGFAGDQIPKYCFPNYVGRPKHMRVMAGALEGDLFIGPKAEEHRGLLTIRYPMEHGVVRDWNDMERIWQYVYSKDQLQTFSEEHPVLLTEAPLNPSKNREKAAEVFFETFNVPALFISMQAVLSLYATGRTTGVVLDSGDGVTHAVPIYEGFAMPHSIMRVDIAGRDVSRYLRLLLRKEGADFHTSAEFEVVRTIKERACYLSINPQKDEALETEKVQYTLPDGSTLDVGPARFRAPELLFQPDLVGDESEGLHEVLAFAIHKSDMDLRRTLFSNIVLSGGSTLFKGFGDRLLSEVKKLAPKDVKIKISAPQERLYSTWIGGSILASLDTFKKMWVSKKEYEEDGSRAIHRKTF</sequence>
<keyword id="KW-0007">Acetylation</keyword>
<keyword id="KW-0067">ATP-binding</keyword>
<keyword id="KW-0963">Cytoplasm</keyword>
<keyword id="KW-0206">Cytoskeleton</keyword>
<keyword id="KW-0903">Direct protein sequencing</keyword>
<keyword id="KW-0944">Nitration</keyword>
<keyword id="KW-0547">Nucleotide-binding</keyword>
<keyword id="KW-1185">Reference proteome</keyword>
<accession>Q8R5C5</accession>
<dbReference type="EMBL" id="AK088839">
    <property type="protein sequence ID" value="BAC40604.1"/>
    <property type="molecule type" value="mRNA"/>
</dbReference>
<dbReference type="EMBL" id="BC023020">
    <property type="protein sequence ID" value="AAH23020.1"/>
    <property type="molecule type" value="mRNA"/>
</dbReference>
<dbReference type="CCDS" id="CCDS14887.1"/>
<dbReference type="RefSeq" id="NP_666219.1">
    <property type="nucleotide sequence ID" value="NM_146107.3"/>
</dbReference>
<dbReference type="SMR" id="Q8R5C5"/>
<dbReference type="BioGRID" id="230579">
    <property type="interactions" value="44"/>
</dbReference>
<dbReference type="FunCoup" id="Q8R5C5">
    <property type="interactions" value="2385"/>
</dbReference>
<dbReference type="IntAct" id="Q8R5C5">
    <property type="interactions" value="31"/>
</dbReference>
<dbReference type="MINT" id="Q8R5C5"/>
<dbReference type="STRING" id="10090.ENSMUSP00000047326"/>
<dbReference type="GlyGen" id="Q8R5C5">
    <property type="glycosylation" value="2 sites, 1 N-linked glycan (1 site), 1 O-linked glycan (1 site)"/>
</dbReference>
<dbReference type="iPTMnet" id="Q8R5C5"/>
<dbReference type="PhosphoSitePlus" id="Q8R5C5"/>
<dbReference type="SwissPalm" id="Q8R5C5"/>
<dbReference type="jPOST" id="Q8R5C5"/>
<dbReference type="PaxDb" id="10090-ENSMUSP00000047326"/>
<dbReference type="PeptideAtlas" id="Q8R5C5"/>
<dbReference type="ProteomicsDB" id="285722"/>
<dbReference type="Pumba" id="Q8R5C5"/>
<dbReference type="Antibodypedia" id="32643">
    <property type="antibodies" value="157 antibodies from 28 providers"/>
</dbReference>
<dbReference type="DNASU" id="226977"/>
<dbReference type="Ensembl" id="ENSMUST00000043951.10">
    <property type="protein sequence ID" value="ENSMUSP00000047326.4"/>
    <property type="gene ID" value="ENSMUSG00000037351.10"/>
</dbReference>
<dbReference type="GeneID" id="226977"/>
<dbReference type="KEGG" id="mmu:226977"/>
<dbReference type="UCSC" id="uc007aqx.1">
    <property type="organism name" value="mouse"/>
</dbReference>
<dbReference type="AGR" id="MGI:1917446"/>
<dbReference type="CTD" id="10120"/>
<dbReference type="MGI" id="MGI:1917446">
    <property type="gene designation" value="Actr1b"/>
</dbReference>
<dbReference type="VEuPathDB" id="HostDB:ENSMUSG00000037351"/>
<dbReference type="eggNOG" id="KOG0676">
    <property type="taxonomic scope" value="Eukaryota"/>
</dbReference>
<dbReference type="GeneTree" id="ENSGT00940000161587"/>
<dbReference type="HOGENOM" id="CLU_027965_0_1_1"/>
<dbReference type="InParanoid" id="Q8R5C5"/>
<dbReference type="OMA" id="YTTWTGG"/>
<dbReference type="OrthoDB" id="5132116at2759"/>
<dbReference type="PhylomeDB" id="Q8R5C5"/>
<dbReference type="TreeFam" id="TF300420"/>
<dbReference type="Reactome" id="R-MMU-2132295">
    <property type="pathway name" value="MHC class II antigen presentation"/>
</dbReference>
<dbReference type="Reactome" id="R-MMU-6798695">
    <property type="pathway name" value="Neutrophil degranulation"/>
</dbReference>
<dbReference type="BioGRID-ORCS" id="226977">
    <property type="hits" value="4 hits in 77 CRISPR screens"/>
</dbReference>
<dbReference type="CD-CODE" id="CE726F99">
    <property type="entry name" value="Postsynaptic density"/>
</dbReference>
<dbReference type="ChiTaRS" id="Actr1b">
    <property type="organism name" value="mouse"/>
</dbReference>
<dbReference type="PRO" id="PR:Q8R5C5"/>
<dbReference type="Proteomes" id="UP000000589">
    <property type="component" value="Chromosome 1"/>
</dbReference>
<dbReference type="RNAct" id="Q8R5C5">
    <property type="molecule type" value="protein"/>
</dbReference>
<dbReference type="Bgee" id="ENSMUSG00000037351">
    <property type="expression patterns" value="Expressed in superior frontal gyrus and 256 other cell types or tissues"/>
</dbReference>
<dbReference type="ExpressionAtlas" id="Q8R5C5">
    <property type="expression patterns" value="baseline and differential"/>
</dbReference>
<dbReference type="GO" id="GO:0005813">
    <property type="term" value="C:centrosome"/>
    <property type="evidence" value="ECO:0007669"/>
    <property type="project" value="UniProtKB-SubCell"/>
</dbReference>
<dbReference type="GO" id="GO:0005737">
    <property type="term" value="C:cytoplasm"/>
    <property type="evidence" value="ECO:0007669"/>
    <property type="project" value="UniProtKB-KW"/>
</dbReference>
<dbReference type="GO" id="GO:0005524">
    <property type="term" value="F:ATP binding"/>
    <property type="evidence" value="ECO:0007669"/>
    <property type="project" value="UniProtKB-KW"/>
</dbReference>
<dbReference type="CDD" id="cd10216">
    <property type="entry name" value="ASKHA_NBD_Arp1"/>
    <property type="match status" value="1"/>
</dbReference>
<dbReference type="FunFam" id="3.30.420.40:FF:000188">
    <property type="entry name" value="Actin like 6B"/>
    <property type="match status" value="1"/>
</dbReference>
<dbReference type="FunFam" id="3.30.420.40:FF:000205">
    <property type="entry name" value="Actin, alpha skeletal muscle"/>
    <property type="match status" value="1"/>
</dbReference>
<dbReference type="FunFam" id="3.30.420.40:FF:000018">
    <property type="entry name" value="Actin-like protein (Centractin)"/>
    <property type="match status" value="1"/>
</dbReference>
<dbReference type="FunFam" id="3.90.640.10:FF:000008">
    <property type="entry name" value="alpha-centractin isoform X1"/>
    <property type="match status" value="1"/>
</dbReference>
<dbReference type="Gene3D" id="3.30.420.40">
    <property type="match status" value="2"/>
</dbReference>
<dbReference type="Gene3D" id="3.90.640.10">
    <property type="entry name" value="Actin, Chain A, domain 4"/>
    <property type="match status" value="1"/>
</dbReference>
<dbReference type="InterPro" id="IPR004000">
    <property type="entry name" value="Actin"/>
</dbReference>
<dbReference type="InterPro" id="IPR020902">
    <property type="entry name" value="Actin/actin-like_CS"/>
</dbReference>
<dbReference type="InterPro" id="IPR004001">
    <property type="entry name" value="Actin_CS"/>
</dbReference>
<dbReference type="InterPro" id="IPR043129">
    <property type="entry name" value="ATPase_NBD"/>
</dbReference>
<dbReference type="PANTHER" id="PTHR11937">
    <property type="entry name" value="ACTIN"/>
    <property type="match status" value="1"/>
</dbReference>
<dbReference type="Pfam" id="PF00022">
    <property type="entry name" value="Actin"/>
    <property type="match status" value="1"/>
</dbReference>
<dbReference type="PRINTS" id="PR00190">
    <property type="entry name" value="ACTIN"/>
</dbReference>
<dbReference type="SMART" id="SM00268">
    <property type="entry name" value="ACTIN"/>
    <property type="match status" value="1"/>
</dbReference>
<dbReference type="SUPFAM" id="SSF53067">
    <property type="entry name" value="Actin-like ATPase domain"/>
    <property type="match status" value="2"/>
</dbReference>
<dbReference type="PROSITE" id="PS00432">
    <property type="entry name" value="ACTINS_2"/>
    <property type="match status" value="1"/>
</dbReference>
<dbReference type="PROSITE" id="PS01132">
    <property type="entry name" value="ACTINS_ACT_LIKE"/>
    <property type="match status" value="1"/>
</dbReference>
<organism>
    <name type="scientific">Mus musculus</name>
    <name type="common">Mouse</name>
    <dbReference type="NCBI Taxonomy" id="10090"/>
    <lineage>
        <taxon>Eukaryota</taxon>
        <taxon>Metazoa</taxon>
        <taxon>Chordata</taxon>
        <taxon>Craniata</taxon>
        <taxon>Vertebrata</taxon>
        <taxon>Euteleostomi</taxon>
        <taxon>Mammalia</taxon>
        <taxon>Eutheria</taxon>
        <taxon>Euarchontoglires</taxon>
        <taxon>Glires</taxon>
        <taxon>Rodentia</taxon>
        <taxon>Myomorpha</taxon>
        <taxon>Muroidea</taxon>
        <taxon>Muridae</taxon>
        <taxon>Murinae</taxon>
        <taxon>Mus</taxon>
        <taxon>Mus</taxon>
    </lineage>
</organism>
<name>ACTY_MOUSE</name>
<evidence type="ECO:0000250" key="1"/>
<evidence type="ECO:0000250" key="2">
    <source>
        <dbReference type="UniProtKB" id="P42025"/>
    </source>
</evidence>
<evidence type="ECO:0000305" key="3"/>
<evidence type="ECO:0007744" key="4">
    <source>
    </source>
</evidence>
<proteinExistence type="evidence at protein level"/>
<feature type="chain" id="PRO_0000089061" description="Beta-centractin">
    <location>
        <begin position="1"/>
        <end position="376"/>
    </location>
</feature>
<feature type="modified residue" description="N-acetylmethionine" evidence="2">
    <location>
        <position position="1"/>
    </location>
</feature>
<feature type="modified residue" description="3'-nitrotyrosine" evidence="4">
    <location>
        <position position="4"/>
    </location>
</feature>
<comment type="function">
    <text evidence="1">Component of a multi-subunit complex involved in microtubule based vesicle motility. It is associated with the centrosome (By similarity).</text>
</comment>
<comment type="subcellular location">
    <subcellularLocation>
        <location>Cytoplasm</location>
        <location>Cytoskeleton</location>
    </subcellularLocation>
    <subcellularLocation>
        <location evidence="1">Cytoplasm</location>
        <location evidence="1">Cytoskeleton</location>
        <location evidence="1">Microtubule organizing center</location>
        <location evidence="1">Centrosome</location>
    </subcellularLocation>
</comment>
<comment type="similarity">
    <text evidence="3">Belongs to the actin family. ARP1 subfamily.</text>
</comment>
<gene>
    <name type="primary">Actr1b</name>
</gene>
<protein>
    <recommendedName>
        <fullName>Beta-centractin</fullName>
    </recommendedName>
    <alternativeName>
        <fullName>Actin-related protein 1B</fullName>
        <shortName>ARP1B</shortName>
    </alternativeName>
</protein>
<reference key="1">
    <citation type="journal article" date="2005" name="Science">
        <title>The transcriptional landscape of the mammalian genome.</title>
        <authorList>
            <person name="Carninci P."/>
            <person name="Kasukawa T."/>
            <person name="Katayama S."/>
            <person name="Gough J."/>
            <person name="Frith M.C."/>
            <person name="Maeda N."/>
            <person name="Oyama R."/>
            <person name="Ravasi T."/>
            <person name="Lenhard B."/>
            <person name="Wells C."/>
            <person name="Kodzius R."/>
            <person name="Shimokawa K."/>
            <person name="Bajic V.B."/>
            <person name="Brenner S.E."/>
            <person name="Batalov S."/>
            <person name="Forrest A.R."/>
            <person name="Zavolan M."/>
            <person name="Davis M.J."/>
            <person name="Wilming L.G."/>
            <person name="Aidinis V."/>
            <person name="Allen J.E."/>
            <person name="Ambesi-Impiombato A."/>
            <person name="Apweiler R."/>
            <person name="Aturaliya R.N."/>
            <person name="Bailey T.L."/>
            <person name="Bansal M."/>
            <person name="Baxter L."/>
            <person name="Beisel K.W."/>
            <person name="Bersano T."/>
            <person name="Bono H."/>
            <person name="Chalk A.M."/>
            <person name="Chiu K.P."/>
            <person name="Choudhary V."/>
            <person name="Christoffels A."/>
            <person name="Clutterbuck D.R."/>
            <person name="Crowe M.L."/>
            <person name="Dalla E."/>
            <person name="Dalrymple B.P."/>
            <person name="de Bono B."/>
            <person name="Della Gatta G."/>
            <person name="di Bernardo D."/>
            <person name="Down T."/>
            <person name="Engstrom P."/>
            <person name="Fagiolini M."/>
            <person name="Faulkner G."/>
            <person name="Fletcher C.F."/>
            <person name="Fukushima T."/>
            <person name="Furuno M."/>
            <person name="Futaki S."/>
            <person name="Gariboldi M."/>
            <person name="Georgii-Hemming P."/>
            <person name="Gingeras T.R."/>
            <person name="Gojobori T."/>
            <person name="Green R.E."/>
            <person name="Gustincich S."/>
            <person name="Harbers M."/>
            <person name="Hayashi Y."/>
            <person name="Hensch T.K."/>
            <person name="Hirokawa N."/>
            <person name="Hill D."/>
            <person name="Huminiecki L."/>
            <person name="Iacono M."/>
            <person name="Ikeo K."/>
            <person name="Iwama A."/>
            <person name="Ishikawa T."/>
            <person name="Jakt M."/>
            <person name="Kanapin A."/>
            <person name="Katoh M."/>
            <person name="Kawasawa Y."/>
            <person name="Kelso J."/>
            <person name="Kitamura H."/>
            <person name="Kitano H."/>
            <person name="Kollias G."/>
            <person name="Krishnan S.P."/>
            <person name="Kruger A."/>
            <person name="Kummerfeld S.K."/>
            <person name="Kurochkin I.V."/>
            <person name="Lareau L.F."/>
            <person name="Lazarevic D."/>
            <person name="Lipovich L."/>
            <person name="Liu J."/>
            <person name="Liuni S."/>
            <person name="McWilliam S."/>
            <person name="Madan Babu M."/>
            <person name="Madera M."/>
            <person name="Marchionni L."/>
            <person name="Matsuda H."/>
            <person name="Matsuzawa S."/>
            <person name="Miki H."/>
            <person name="Mignone F."/>
            <person name="Miyake S."/>
            <person name="Morris K."/>
            <person name="Mottagui-Tabar S."/>
            <person name="Mulder N."/>
            <person name="Nakano N."/>
            <person name="Nakauchi H."/>
            <person name="Ng P."/>
            <person name="Nilsson R."/>
            <person name="Nishiguchi S."/>
            <person name="Nishikawa S."/>
            <person name="Nori F."/>
            <person name="Ohara O."/>
            <person name="Okazaki Y."/>
            <person name="Orlando V."/>
            <person name="Pang K.C."/>
            <person name="Pavan W.J."/>
            <person name="Pavesi G."/>
            <person name="Pesole G."/>
            <person name="Petrovsky N."/>
            <person name="Piazza S."/>
            <person name="Reed J."/>
            <person name="Reid J.F."/>
            <person name="Ring B.Z."/>
            <person name="Ringwald M."/>
            <person name="Rost B."/>
            <person name="Ruan Y."/>
            <person name="Salzberg S.L."/>
            <person name="Sandelin A."/>
            <person name="Schneider C."/>
            <person name="Schoenbach C."/>
            <person name="Sekiguchi K."/>
            <person name="Semple C.A."/>
            <person name="Seno S."/>
            <person name="Sessa L."/>
            <person name="Sheng Y."/>
            <person name="Shibata Y."/>
            <person name="Shimada H."/>
            <person name="Shimada K."/>
            <person name="Silva D."/>
            <person name="Sinclair B."/>
            <person name="Sperling S."/>
            <person name="Stupka E."/>
            <person name="Sugiura K."/>
            <person name="Sultana R."/>
            <person name="Takenaka Y."/>
            <person name="Taki K."/>
            <person name="Tammoja K."/>
            <person name="Tan S.L."/>
            <person name="Tang S."/>
            <person name="Taylor M.S."/>
            <person name="Tegner J."/>
            <person name="Teichmann S.A."/>
            <person name="Ueda H.R."/>
            <person name="van Nimwegen E."/>
            <person name="Verardo R."/>
            <person name="Wei C.L."/>
            <person name="Yagi K."/>
            <person name="Yamanishi H."/>
            <person name="Zabarovsky E."/>
            <person name="Zhu S."/>
            <person name="Zimmer A."/>
            <person name="Hide W."/>
            <person name="Bult C."/>
            <person name="Grimmond S.M."/>
            <person name="Teasdale R.D."/>
            <person name="Liu E.T."/>
            <person name="Brusic V."/>
            <person name="Quackenbush J."/>
            <person name="Wahlestedt C."/>
            <person name="Mattick J.S."/>
            <person name="Hume D.A."/>
            <person name="Kai C."/>
            <person name="Sasaki D."/>
            <person name="Tomaru Y."/>
            <person name="Fukuda S."/>
            <person name="Kanamori-Katayama M."/>
            <person name="Suzuki M."/>
            <person name="Aoki J."/>
            <person name="Arakawa T."/>
            <person name="Iida J."/>
            <person name="Imamura K."/>
            <person name="Itoh M."/>
            <person name="Kato T."/>
            <person name="Kawaji H."/>
            <person name="Kawagashira N."/>
            <person name="Kawashima T."/>
            <person name="Kojima M."/>
            <person name="Kondo S."/>
            <person name="Konno H."/>
            <person name="Nakano K."/>
            <person name="Ninomiya N."/>
            <person name="Nishio T."/>
            <person name="Okada M."/>
            <person name="Plessy C."/>
            <person name="Shibata K."/>
            <person name="Shiraki T."/>
            <person name="Suzuki S."/>
            <person name="Tagami M."/>
            <person name="Waki K."/>
            <person name="Watahiki A."/>
            <person name="Okamura-Oho Y."/>
            <person name="Suzuki H."/>
            <person name="Kawai J."/>
            <person name="Hayashizaki Y."/>
        </authorList>
    </citation>
    <scope>NUCLEOTIDE SEQUENCE [LARGE SCALE MRNA]</scope>
    <source>
        <strain>NOD</strain>
        <tissue>Thymus</tissue>
    </source>
</reference>
<reference key="2">
    <citation type="journal article" date="2004" name="Genome Res.">
        <title>The status, quality, and expansion of the NIH full-length cDNA project: the Mammalian Gene Collection (MGC).</title>
        <authorList>
            <consortium name="The MGC Project Team"/>
        </authorList>
    </citation>
    <scope>NUCLEOTIDE SEQUENCE [LARGE SCALE MRNA]</scope>
</reference>
<reference key="3">
    <citation type="submission" date="2007-03" db="UniProtKB">
        <authorList>
            <person name="Lubec G."/>
            <person name="Klug S."/>
        </authorList>
    </citation>
    <scope>PROTEIN SEQUENCE OF 201-215 AND 239-255</scope>
    <scope>IDENTIFICATION BY MASS SPECTROMETRY</scope>
    <source>
        <tissue>Hippocampus</tissue>
    </source>
</reference>
<reference key="4">
    <citation type="journal article" date="2006" name="Biochemistry">
        <title>Endogenously nitrated proteins in mouse brain: links to neurodegenerative disease.</title>
        <authorList>
            <person name="Sacksteder C.A."/>
            <person name="Qian W.-J."/>
            <person name="Knyushko T.V."/>
            <person name="Wang H."/>
            <person name="Chin M.H."/>
            <person name="Lacan G."/>
            <person name="Melega W.P."/>
            <person name="Camp D.G. II"/>
            <person name="Smith R.D."/>
            <person name="Smith D.J."/>
            <person name="Squier T.C."/>
            <person name="Bigelow D.J."/>
        </authorList>
    </citation>
    <scope>NITRATION [LARGE SCALE ANALYSIS] AT TYR-4</scope>
    <scope>IDENTIFICATION BY MASS SPECTROMETRY [LARGE SCALE ANALYSIS]</scope>
    <source>
        <tissue>Brain</tissue>
    </source>
</reference>
<reference key="5">
    <citation type="journal article" date="2010" name="Cell">
        <title>A tissue-specific atlas of mouse protein phosphorylation and expression.</title>
        <authorList>
            <person name="Huttlin E.L."/>
            <person name="Jedrychowski M.P."/>
            <person name="Elias J.E."/>
            <person name="Goswami T."/>
            <person name="Rad R."/>
            <person name="Beausoleil S.A."/>
            <person name="Villen J."/>
            <person name="Haas W."/>
            <person name="Sowa M.E."/>
            <person name="Gygi S.P."/>
        </authorList>
    </citation>
    <scope>IDENTIFICATION BY MASS SPECTROMETRY [LARGE SCALE ANALYSIS]</scope>
    <source>
        <tissue>Brain</tissue>
        <tissue>Brown adipose tissue</tissue>
        <tissue>Heart</tissue>
        <tissue>Kidney</tissue>
        <tissue>Liver</tissue>
        <tissue>Lung</tissue>
        <tissue>Pancreas</tissue>
        <tissue>Spleen</tissue>
        <tissue>Testis</tissue>
    </source>
</reference>